<evidence type="ECO:0000250" key="1">
    <source>
        <dbReference type="UniProtKB" id="P02787"/>
    </source>
</evidence>
<evidence type="ECO:0000255" key="2"/>
<evidence type="ECO:0000255" key="3">
    <source>
        <dbReference type="PROSITE-ProRule" id="PRU00741"/>
    </source>
</evidence>
<evidence type="ECO:0000269" key="4">
    <source>
    </source>
</evidence>
<evidence type="ECO:0000269" key="5">
    <source>
    </source>
</evidence>
<evidence type="ECO:0000269" key="6">
    <source>
    </source>
</evidence>
<evidence type="ECO:0000303" key="7">
    <source>
    </source>
</evidence>
<evidence type="ECO:0000305" key="8"/>
<protein>
    <recommendedName>
        <fullName>Serotransferrin</fullName>
        <shortName>Transferrin</shortName>
    </recommendedName>
    <alternativeName>
        <fullName>Beta-1 metal-binding globulin</fullName>
    </alternativeName>
    <alternativeName>
        <fullName>Liver regeneration-related protein LRRG03</fullName>
    </alternativeName>
    <alternativeName>
        <fullName>Siderophilin</fullName>
    </alternativeName>
</protein>
<proteinExistence type="evidence at protein level"/>
<reference key="1">
    <citation type="journal article" date="1995" name="Biochem. J.">
        <title>Rat mammary-gland transferrin: nucleotide sequence, phylogenetic analysis and glycan structure.</title>
        <authorList>
            <person name="Escriva H."/>
            <person name="Pierce A."/>
            <person name="Coddeville B."/>
            <person name="Gonzalez F."/>
            <person name="Benaissa M."/>
            <person name="Leger D."/>
            <person name="Wieruszeski J.-M."/>
            <person name="Spik G."/>
            <person name="Pamblanco M."/>
        </authorList>
    </citation>
    <scope>NUCLEOTIDE SEQUENCE [MRNA] (ISOFORM 1)</scope>
    <source>
        <strain>Wistar</strain>
        <tissue>Mammary gland</tissue>
    </source>
</reference>
<reference key="2">
    <citation type="journal article" date="1996" name="Comp. Biochem. Physiol.">
        <title>Complete sequence analysis of rat transferrin and expression of transferrin but not lactoferrin in the digestive glands.</title>
        <authorList>
            <person name="Hosino A."/>
            <person name="Hisayasu S."/>
            <person name="Shimada T."/>
        </authorList>
    </citation>
    <scope>NUCLEOTIDE SEQUENCE [MRNA] (ISOFORM 1)</scope>
    <source>
        <strain>Wistar</strain>
        <tissue>Liver</tissue>
    </source>
</reference>
<reference key="3">
    <citation type="submission" date="2003-06" db="EMBL/GenBank/DDBJ databases">
        <title>Liver regeneration after PH.</title>
        <authorList>
            <person name="Xu C.S."/>
            <person name="Li W.Q."/>
            <person name="Li Y.C."/>
            <person name="Han H.P."/>
            <person name="Wang G.P."/>
            <person name="Chai L.Q."/>
            <person name="Yuan J.Y."/>
            <person name="Yang K.J."/>
            <person name="Yan H.M."/>
            <person name="Chang C.F."/>
            <person name="Zhao L.F."/>
            <person name="Ma H."/>
            <person name="Wang L."/>
            <person name="Wang S.F."/>
            <person name="Shi J.B."/>
            <person name="Rahman S."/>
            <person name="Wang Q.N."/>
            <person name="Zhang J.B."/>
        </authorList>
    </citation>
    <scope>NUCLEOTIDE SEQUENCE [LARGE SCALE MRNA] (ISOFORM 1)</scope>
</reference>
<reference key="4">
    <citation type="journal article" date="2004" name="Genome Res.">
        <title>The status, quality, and expansion of the NIH full-length cDNA project: the Mammalian Gene Collection (MGC).</title>
        <authorList>
            <consortium name="The MGC Project Team"/>
        </authorList>
    </citation>
    <scope>NUCLEOTIDE SEQUENCE [LARGE SCALE MRNA] (ISOFORM 1)</scope>
    <source>
        <tissue>Testis</tissue>
    </source>
</reference>
<reference key="5">
    <citation type="journal article" date="1984" name="Biochem. Biophys. Res. Commun.">
        <title>Synthesis of rat transferrin in Escherichia coli containing a recombinant bacteriophage.</title>
        <authorList>
            <person name="Aldred A.R."/>
            <person name="Howlett G.J."/>
            <person name="Schreiber G."/>
        </authorList>
    </citation>
    <scope>NUCLEOTIDE SEQUENCE [MRNA] OF 7-295 (ISOFORM 2)</scope>
</reference>
<reference key="6">
    <citation type="journal article" date="1987" name="Endocrinology">
        <title>Transferrin messenger ribonucleic acid: molecular cloning and hormonal regulation in rat Sertoli cells.</title>
        <authorList>
            <person name="Huggenvik J.I."/>
            <person name="Idzerda R.L."/>
            <person name="Haywood L."/>
            <person name="Lee D.C."/>
            <person name="McKnight G.S."/>
            <person name="Griswold M.D."/>
        </authorList>
    </citation>
    <scope>NUCLEOTIDE SEQUENCE [MRNA] OF 521-698</scope>
</reference>
<reference key="7">
    <citation type="journal article" date="1979" name="J. Biol. Chem.">
        <title>The synthesis and secretion of rat transferrin.</title>
        <authorList>
            <person name="Schreiber G."/>
            <person name="Dryburgh H."/>
            <person name="Millership A."/>
            <person name="Matsuda Y."/>
            <person name="Inglis A."/>
            <person name="Phillips J."/>
            <person name="Edwards K."/>
            <person name="Maggs J."/>
        </authorList>
    </citation>
    <scope>PROTEIN SEQUENCE OF 20-47</scope>
</reference>
<reference key="8">
    <citation type="journal article" date="1988" name="Biochim. Biophys. Acta">
        <title>Properties of the transferrin associated with rat intestinal mucosa.</title>
        <authorList>
            <person name="Purves L.R."/>
            <person name="Purves M."/>
            <person name="Linton N."/>
            <person name="Brandt W."/>
            <person name="Johnson G."/>
            <person name="Jacobs P."/>
        </authorList>
    </citation>
    <scope>PROTEIN SEQUENCE OF 20-30 AND 642-653</scope>
</reference>
<reference key="9">
    <citation type="journal article" date="1991" name="J. Cell. Biochem.">
        <title>Lung-derived growth factor that stimulates the growth of lung-metastasizing tumor cells: identification as transferrin.</title>
        <authorList>
            <person name="Cavanaugh P.G."/>
            <person name="Nicolson G.L."/>
        </authorList>
    </citation>
    <scope>PROTEIN SEQUENCE OF 89-102; 232-243 AND 404-411</scope>
</reference>
<reference key="10">
    <citation type="submission" date="2007-07" db="UniProtKB">
        <authorList>
            <person name="Lubec G."/>
            <person name="Afjehi-Sadat L."/>
            <person name="Kang S.U."/>
        </authorList>
    </citation>
    <scope>PROTEIN SEQUENCE OF 144-162; 240-251; 332-343; 588-609; 616-624; 630-642 AND 660-682</scope>
    <scope>IDENTIFICATION BY MASS SPECTROMETRY</scope>
    <source>
        <strain>Sprague-Dawley</strain>
        <tissue>Brain</tissue>
        <tissue>Spinal cord</tissue>
    </source>
</reference>
<reference key="11">
    <citation type="journal article" date="2004" name="Mol. Biol. Cell">
        <title>Organellar proteomics reveals Golgi arginine dimethylation.</title>
        <authorList>
            <person name="Wu C.C."/>
            <person name="MacCoss M.J."/>
            <person name="Mardones G."/>
            <person name="Finnigan C."/>
            <person name="Mogelsvang S."/>
            <person name="Yates J.R. III"/>
            <person name="Howell K.E."/>
        </authorList>
    </citation>
    <scope>METHYLATION AT ARG-42</scope>
    <scope>IDENTIFICATION BY MASS SPECTROMETRY</scope>
</reference>
<gene>
    <name type="primary">Tf</name>
</gene>
<dbReference type="EMBL" id="X77158">
    <property type="protein sequence ID" value="CAA54403.1"/>
    <property type="molecule type" value="mRNA"/>
</dbReference>
<dbReference type="EMBL" id="D38380">
    <property type="protein sequence ID" value="BAA07458.1"/>
    <property type="molecule type" value="mRNA"/>
</dbReference>
<dbReference type="EMBL" id="AY327504">
    <property type="protein sequence ID" value="AAP97736.1"/>
    <property type="molecule type" value="mRNA"/>
</dbReference>
<dbReference type="EMBL" id="BC087021">
    <property type="protein sequence ID" value="AAH87021.1"/>
    <property type="molecule type" value="mRNA"/>
</dbReference>
<dbReference type="EMBL" id="M26113">
    <property type="protein sequence ID" value="AAA42266.1"/>
    <property type="molecule type" value="mRNA"/>
</dbReference>
<dbReference type="EMBL" id="M27966">
    <property type="protein sequence ID" value="AAA42267.1"/>
    <property type="molecule type" value="mRNA"/>
</dbReference>
<dbReference type="PIR" id="S49163">
    <property type="entry name" value="S49163"/>
</dbReference>
<dbReference type="RefSeq" id="NP_001013128.1">
    <molecule id="P12346-1"/>
    <property type="nucleotide sequence ID" value="NM_001013110.1"/>
</dbReference>
<dbReference type="SMR" id="P12346"/>
<dbReference type="BioGRID" id="246945">
    <property type="interactions" value="4"/>
</dbReference>
<dbReference type="FunCoup" id="P12346">
    <property type="interactions" value="420"/>
</dbReference>
<dbReference type="IntAct" id="P12346">
    <property type="interactions" value="2"/>
</dbReference>
<dbReference type="MINT" id="P12346"/>
<dbReference type="STRING" id="10116.ENSRNOP00000012725"/>
<dbReference type="Allergome" id="1417">
    <property type="allergen name" value="Rat n Transferrin"/>
</dbReference>
<dbReference type="MEROPS" id="S60.970"/>
<dbReference type="GlyConnect" id="557">
    <property type="glycosylation" value="6 N-Linked glycans"/>
</dbReference>
<dbReference type="GlyCosmos" id="P12346">
    <property type="glycosylation" value="1 site, 15 glycans"/>
</dbReference>
<dbReference type="GlyGen" id="P12346">
    <property type="glycosylation" value="2 sites, 15 N-linked glycans (2 sites)"/>
</dbReference>
<dbReference type="iPTMnet" id="P12346"/>
<dbReference type="PhosphoSitePlus" id="P12346"/>
<dbReference type="SwissPalm" id="P12346"/>
<dbReference type="PaxDb" id="10116-ENSRNOP00000012725"/>
<dbReference type="Ensembl" id="ENSRNOT00000045628.6">
    <molecule id="P12346-1"/>
    <property type="protein sequence ID" value="ENSRNOP00000045637.2"/>
    <property type="gene ID" value="ENSRNOG00000030625.7"/>
</dbReference>
<dbReference type="GeneID" id="24825"/>
<dbReference type="KEGG" id="rno:24825"/>
<dbReference type="UCSC" id="RGD:3845">
    <molecule id="P12346-1"/>
    <property type="organism name" value="rat"/>
</dbReference>
<dbReference type="AGR" id="RGD:3845"/>
<dbReference type="CTD" id="7018"/>
<dbReference type="RGD" id="3845">
    <property type="gene designation" value="Tf"/>
</dbReference>
<dbReference type="eggNOG" id="KOG0090">
    <property type="taxonomic scope" value="Eukaryota"/>
</dbReference>
<dbReference type="GeneTree" id="ENSGT00940000154388"/>
<dbReference type="HOGENOM" id="CLU_011309_1_0_1"/>
<dbReference type="InParanoid" id="P12346"/>
<dbReference type="OrthoDB" id="38548at9989"/>
<dbReference type="PhylomeDB" id="P12346"/>
<dbReference type="Reactome" id="R-RNO-114608">
    <property type="pathway name" value="Platelet degranulation"/>
</dbReference>
<dbReference type="Reactome" id="R-RNO-381426">
    <property type="pathway name" value="Regulation of Insulin-like Growth Factor (IGF) transport and uptake by Insulin-like Growth Factor Binding Proteins (IGFBPs)"/>
</dbReference>
<dbReference type="Reactome" id="R-RNO-8856825">
    <property type="pathway name" value="Cargo recognition for clathrin-mediated endocytosis"/>
</dbReference>
<dbReference type="Reactome" id="R-RNO-8856828">
    <property type="pathway name" value="Clathrin-mediated endocytosis"/>
</dbReference>
<dbReference type="Reactome" id="R-RNO-8957275">
    <property type="pathway name" value="Post-translational protein phosphorylation"/>
</dbReference>
<dbReference type="Reactome" id="R-RNO-917937">
    <property type="pathway name" value="Iron uptake and transport"/>
</dbReference>
<dbReference type="Reactome" id="R-RNO-917977">
    <property type="pathway name" value="Transferrin endocytosis and recycling"/>
</dbReference>
<dbReference type="PRO" id="PR:P12346"/>
<dbReference type="Proteomes" id="UP000002494">
    <property type="component" value="Chromosome 8"/>
</dbReference>
<dbReference type="Bgee" id="ENSRNOG00000030625">
    <property type="expression patterns" value="Expressed in liver and 19 other cell types or tissues"/>
</dbReference>
<dbReference type="ExpressionAtlas" id="P12346">
    <property type="expression patterns" value="baseline and differential"/>
</dbReference>
<dbReference type="GO" id="GO:0016324">
    <property type="term" value="C:apical plasma membrane"/>
    <property type="evidence" value="ECO:0000266"/>
    <property type="project" value="RGD"/>
</dbReference>
<dbReference type="GO" id="GO:0045178">
    <property type="term" value="C:basal part of cell"/>
    <property type="evidence" value="ECO:0000266"/>
    <property type="project" value="RGD"/>
</dbReference>
<dbReference type="GO" id="GO:0009925">
    <property type="term" value="C:basal plasma membrane"/>
    <property type="evidence" value="ECO:0000266"/>
    <property type="project" value="RGD"/>
</dbReference>
<dbReference type="GO" id="GO:0005604">
    <property type="term" value="C:basement membrane"/>
    <property type="evidence" value="ECO:0000314"/>
    <property type="project" value="RGD"/>
</dbReference>
<dbReference type="GO" id="GO:0009986">
    <property type="term" value="C:cell surface"/>
    <property type="evidence" value="ECO:0000266"/>
    <property type="project" value="RGD"/>
</dbReference>
<dbReference type="GO" id="GO:0051286">
    <property type="term" value="C:cell tip"/>
    <property type="evidence" value="ECO:0000314"/>
    <property type="project" value="RGD"/>
</dbReference>
<dbReference type="GO" id="GO:0005905">
    <property type="term" value="C:clathrin-coated pit"/>
    <property type="evidence" value="ECO:0000266"/>
    <property type="project" value="RGD"/>
</dbReference>
<dbReference type="GO" id="GO:0031410">
    <property type="term" value="C:cytoplasmic vesicle"/>
    <property type="evidence" value="ECO:0000266"/>
    <property type="project" value="RGD"/>
</dbReference>
<dbReference type="GO" id="GO:0030425">
    <property type="term" value="C:dendrite"/>
    <property type="evidence" value="ECO:0000314"/>
    <property type="project" value="RGD"/>
</dbReference>
<dbReference type="GO" id="GO:0097433">
    <property type="term" value="C:dense body"/>
    <property type="evidence" value="ECO:0000266"/>
    <property type="project" value="RGD"/>
</dbReference>
<dbReference type="GO" id="GO:0005769">
    <property type="term" value="C:early endosome"/>
    <property type="evidence" value="ECO:0000266"/>
    <property type="project" value="RGD"/>
</dbReference>
<dbReference type="GO" id="GO:0030139">
    <property type="term" value="C:endocytic vesicle"/>
    <property type="evidence" value="ECO:0000266"/>
    <property type="project" value="RGD"/>
</dbReference>
<dbReference type="GO" id="GO:0005768">
    <property type="term" value="C:endosome"/>
    <property type="evidence" value="ECO:0000266"/>
    <property type="project" value="RGD"/>
</dbReference>
<dbReference type="GO" id="GO:0005576">
    <property type="term" value="C:extracellular region"/>
    <property type="evidence" value="ECO:0000266"/>
    <property type="project" value="RGD"/>
</dbReference>
<dbReference type="GO" id="GO:0005615">
    <property type="term" value="C:extracellular space"/>
    <property type="evidence" value="ECO:0000314"/>
    <property type="project" value="RGD"/>
</dbReference>
<dbReference type="GO" id="GO:1990712">
    <property type="term" value="C:HFE-transferrin receptor complex"/>
    <property type="evidence" value="ECO:0000266"/>
    <property type="project" value="RGD"/>
</dbReference>
<dbReference type="GO" id="GO:0005770">
    <property type="term" value="C:late endosome"/>
    <property type="evidence" value="ECO:0000266"/>
    <property type="project" value="RGD"/>
</dbReference>
<dbReference type="GO" id="GO:0016020">
    <property type="term" value="C:membrane"/>
    <property type="evidence" value="ECO:0000266"/>
    <property type="project" value="RGD"/>
</dbReference>
<dbReference type="GO" id="GO:0048471">
    <property type="term" value="C:perinuclear region of cytoplasm"/>
    <property type="evidence" value="ECO:0000266"/>
    <property type="project" value="RGD"/>
</dbReference>
<dbReference type="GO" id="GO:0005886">
    <property type="term" value="C:plasma membrane"/>
    <property type="evidence" value="ECO:0000318"/>
    <property type="project" value="GO_Central"/>
</dbReference>
<dbReference type="GO" id="GO:0055037">
    <property type="term" value="C:recycling endosome"/>
    <property type="evidence" value="ECO:0000266"/>
    <property type="project" value="RGD"/>
</dbReference>
<dbReference type="GO" id="GO:0031982">
    <property type="term" value="C:vesicle"/>
    <property type="evidence" value="ECO:0000266"/>
    <property type="project" value="RGD"/>
</dbReference>
<dbReference type="GO" id="GO:0030120">
    <property type="term" value="C:vesicle coat"/>
    <property type="evidence" value="ECO:0000266"/>
    <property type="project" value="RGD"/>
</dbReference>
<dbReference type="GO" id="GO:0019899">
    <property type="term" value="F:enzyme binding"/>
    <property type="evidence" value="ECO:0000266"/>
    <property type="project" value="RGD"/>
</dbReference>
<dbReference type="GO" id="GO:0008199">
    <property type="term" value="F:ferric iron binding"/>
    <property type="evidence" value="ECO:0000314"/>
    <property type="project" value="RGD"/>
</dbReference>
<dbReference type="GO" id="GO:0008198">
    <property type="term" value="F:ferrous iron binding"/>
    <property type="evidence" value="ECO:0000266"/>
    <property type="project" value="RGD"/>
</dbReference>
<dbReference type="GO" id="GO:0034986">
    <property type="term" value="F:iron chaperone activity"/>
    <property type="evidence" value="ECO:0000266"/>
    <property type="project" value="RGD"/>
</dbReference>
<dbReference type="GO" id="GO:1990459">
    <property type="term" value="F:transferrin receptor binding"/>
    <property type="evidence" value="ECO:0000266"/>
    <property type="project" value="RGD"/>
</dbReference>
<dbReference type="GO" id="GO:0044325">
    <property type="term" value="F:transmembrane transporter binding"/>
    <property type="evidence" value="ECO:0000266"/>
    <property type="project" value="RGD"/>
</dbReference>
<dbReference type="GO" id="GO:0007015">
    <property type="term" value="P:actin filament organization"/>
    <property type="evidence" value="ECO:0000266"/>
    <property type="project" value="RGD"/>
</dbReference>
<dbReference type="GO" id="GO:0006953">
    <property type="term" value="P:acute-phase response"/>
    <property type="evidence" value="ECO:0000270"/>
    <property type="project" value="RGD"/>
</dbReference>
<dbReference type="GO" id="GO:0019731">
    <property type="term" value="P:antibacterial humoral response"/>
    <property type="evidence" value="ECO:0000318"/>
    <property type="project" value="GO_Central"/>
</dbReference>
<dbReference type="GO" id="GO:0006915">
    <property type="term" value="P:apoptotic process"/>
    <property type="evidence" value="ECO:0000250"/>
    <property type="project" value="UniProtKB"/>
</dbReference>
<dbReference type="GO" id="GO:0071320">
    <property type="term" value="P:cellular response to cAMP"/>
    <property type="evidence" value="ECO:0000270"/>
    <property type="project" value="UniProtKB"/>
</dbReference>
<dbReference type="GO" id="GO:0071372">
    <property type="term" value="P:cellular response to follicle-stimulating hormone stimulus"/>
    <property type="evidence" value="ECO:0000270"/>
    <property type="project" value="UniProtKB"/>
</dbReference>
<dbReference type="GO" id="GO:0071281">
    <property type="term" value="P:cellular response to iron ion"/>
    <property type="evidence" value="ECO:0000266"/>
    <property type="project" value="RGD"/>
</dbReference>
<dbReference type="GO" id="GO:0070371">
    <property type="term" value="P:ERK1 and ERK2 cascade"/>
    <property type="evidence" value="ECO:0000266"/>
    <property type="project" value="RGD"/>
</dbReference>
<dbReference type="GO" id="GO:0006879">
    <property type="term" value="P:intracellular iron ion homeostasis"/>
    <property type="evidence" value="ECO:0000266"/>
    <property type="project" value="RGD"/>
</dbReference>
<dbReference type="GO" id="GO:0006826">
    <property type="term" value="P:iron ion transport"/>
    <property type="evidence" value="ECO:0000314"/>
    <property type="project" value="RGD"/>
</dbReference>
<dbReference type="GO" id="GO:0060586">
    <property type="term" value="P:multicellular organismal-level iron ion homeostasis"/>
    <property type="evidence" value="ECO:0000266"/>
    <property type="project" value="RGD"/>
</dbReference>
<dbReference type="GO" id="GO:0030316">
    <property type="term" value="P:osteoclast differentiation"/>
    <property type="evidence" value="ECO:0000266"/>
    <property type="project" value="RGD"/>
</dbReference>
<dbReference type="GO" id="GO:0045780">
    <property type="term" value="P:positive regulation of bone resorption"/>
    <property type="evidence" value="ECO:0000266"/>
    <property type="project" value="RGD"/>
</dbReference>
<dbReference type="GO" id="GO:2000147">
    <property type="term" value="P:positive regulation of cell motility"/>
    <property type="evidence" value="ECO:0000266"/>
    <property type="project" value="RGD"/>
</dbReference>
<dbReference type="GO" id="GO:0045893">
    <property type="term" value="P:positive regulation of DNA-templated transcription"/>
    <property type="evidence" value="ECO:0000266"/>
    <property type="project" value="RGD"/>
</dbReference>
<dbReference type="GO" id="GO:0031643">
    <property type="term" value="P:positive regulation of myelination"/>
    <property type="evidence" value="ECO:0000314"/>
    <property type="project" value="RGD"/>
</dbReference>
<dbReference type="GO" id="GO:0070447">
    <property type="term" value="P:positive regulation of oligodendrocyte progenitor proliferation"/>
    <property type="evidence" value="ECO:0000314"/>
    <property type="project" value="RGD"/>
</dbReference>
<dbReference type="GO" id="GO:0042327">
    <property type="term" value="P:positive regulation of phosphorylation"/>
    <property type="evidence" value="ECO:0000266"/>
    <property type="project" value="RGD"/>
</dbReference>
<dbReference type="GO" id="GO:0032436">
    <property type="term" value="P:positive regulation of proteasomal ubiquitin-dependent protein catabolic process"/>
    <property type="evidence" value="ECO:0000266"/>
    <property type="project" value="RGD"/>
</dbReference>
<dbReference type="GO" id="GO:0048260">
    <property type="term" value="P:positive regulation of receptor-mediated endocytosis"/>
    <property type="evidence" value="ECO:0000266"/>
    <property type="project" value="RGD"/>
</dbReference>
<dbReference type="GO" id="GO:0034756">
    <property type="term" value="P:regulation of iron ion transport"/>
    <property type="evidence" value="ECO:0000266"/>
    <property type="project" value="RGD"/>
</dbReference>
<dbReference type="GO" id="GO:0009617">
    <property type="term" value="P:response to bacterium"/>
    <property type="evidence" value="ECO:0000266"/>
    <property type="project" value="RGD"/>
</dbReference>
<dbReference type="GO" id="GO:0001666">
    <property type="term" value="P:response to hypoxia"/>
    <property type="evidence" value="ECO:0000270"/>
    <property type="project" value="RGD"/>
</dbReference>
<dbReference type="GO" id="GO:0010288">
    <property type="term" value="P:response to lead ion"/>
    <property type="evidence" value="ECO:0000270"/>
    <property type="project" value="RGD"/>
</dbReference>
<dbReference type="CDD" id="cd13617">
    <property type="entry name" value="PBP2_transferrin_C"/>
    <property type="match status" value="1"/>
</dbReference>
<dbReference type="CDD" id="cd13618">
    <property type="entry name" value="PBP2_transferrin_N"/>
    <property type="match status" value="1"/>
</dbReference>
<dbReference type="FunFam" id="3.40.190.10:FF:000095">
    <property type="entry name" value="Lactotransferrin"/>
    <property type="match status" value="1"/>
</dbReference>
<dbReference type="FunFam" id="3.40.190.10:FF:000105">
    <property type="entry name" value="Serotransferrin"/>
    <property type="match status" value="1"/>
</dbReference>
<dbReference type="Gene3D" id="3.40.190.10">
    <property type="entry name" value="Periplasmic binding protein-like II"/>
    <property type="match status" value="4"/>
</dbReference>
<dbReference type="InterPro" id="IPR030685">
    <property type="entry name" value="Serotransferrin_mammal"/>
</dbReference>
<dbReference type="InterPro" id="IPR016357">
    <property type="entry name" value="Transferrin"/>
</dbReference>
<dbReference type="InterPro" id="IPR001156">
    <property type="entry name" value="Transferrin-like_dom"/>
</dbReference>
<dbReference type="InterPro" id="IPR018195">
    <property type="entry name" value="Transferrin_Fe_BS"/>
</dbReference>
<dbReference type="PANTHER" id="PTHR11485:SF31">
    <property type="entry name" value="SEROTRANSFERRIN"/>
    <property type="match status" value="1"/>
</dbReference>
<dbReference type="PANTHER" id="PTHR11485">
    <property type="entry name" value="TRANSFERRIN"/>
    <property type="match status" value="1"/>
</dbReference>
<dbReference type="Pfam" id="PF00405">
    <property type="entry name" value="Transferrin"/>
    <property type="match status" value="2"/>
</dbReference>
<dbReference type="PIRSF" id="PIRSF500682">
    <property type="entry name" value="Serotransferrin"/>
    <property type="match status" value="1"/>
</dbReference>
<dbReference type="PIRSF" id="PIRSF002549">
    <property type="entry name" value="Transferrin"/>
    <property type="match status" value="1"/>
</dbReference>
<dbReference type="PRINTS" id="PR00422">
    <property type="entry name" value="TRANSFERRIN"/>
</dbReference>
<dbReference type="SMART" id="SM00094">
    <property type="entry name" value="TR_FER"/>
    <property type="match status" value="2"/>
</dbReference>
<dbReference type="SUPFAM" id="SSF53850">
    <property type="entry name" value="Periplasmic binding protein-like II"/>
    <property type="match status" value="2"/>
</dbReference>
<dbReference type="PROSITE" id="PS00205">
    <property type="entry name" value="TRANSFERRIN_LIKE_1"/>
    <property type="match status" value="1"/>
</dbReference>
<dbReference type="PROSITE" id="PS00206">
    <property type="entry name" value="TRANSFERRIN_LIKE_2"/>
    <property type="match status" value="2"/>
</dbReference>
<dbReference type="PROSITE" id="PS00207">
    <property type="entry name" value="TRANSFERRIN_LIKE_3"/>
    <property type="match status" value="2"/>
</dbReference>
<dbReference type="PROSITE" id="PS51408">
    <property type="entry name" value="TRANSFERRIN_LIKE_4"/>
    <property type="match status" value="2"/>
</dbReference>
<feature type="signal peptide" evidence="5 6">
    <location>
        <begin position="1"/>
        <end position="19"/>
    </location>
</feature>
<feature type="chain" id="PRO_0000035718" description="Serotransferrin">
    <location>
        <begin position="20"/>
        <end position="698"/>
    </location>
</feature>
<feature type="domain" description="Transferrin-like 1" evidence="3">
    <location>
        <begin position="25"/>
        <end position="347"/>
    </location>
</feature>
<feature type="domain" description="Transferrin-like 2" evidence="3">
    <location>
        <begin position="360"/>
        <end position="683"/>
    </location>
</feature>
<feature type="binding site" evidence="3">
    <location>
        <position position="82"/>
    </location>
    <ligand>
        <name>Fe(3+)</name>
        <dbReference type="ChEBI" id="CHEBI:29034"/>
        <label>1</label>
    </ligand>
</feature>
<feature type="binding site" evidence="3">
    <location>
        <position position="114"/>
    </location>
    <ligand>
        <name>Fe(3+)</name>
        <dbReference type="ChEBI" id="CHEBI:29034"/>
        <label>1</label>
    </ligand>
</feature>
<feature type="binding site" evidence="3">
    <location>
        <position position="139"/>
    </location>
    <ligand>
        <name>hydrogencarbonate</name>
        <dbReference type="ChEBI" id="CHEBI:17544"/>
        <label>1</label>
    </ligand>
</feature>
<feature type="binding site" evidence="3">
    <location>
        <position position="143"/>
    </location>
    <ligand>
        <name>hydrogencarbonate</name>
        <dbReference type="ChEBI" id="CHEBI:17544"/>
        <label>1</label>
    </ligand>
</feature>
<feature type="binding site" evidence="3">
    <location>
        <position position="145"/>
    </location>
    <ligand>
        <name>hydrogencarbonate</name>
        <dbReference type="ChEBI" id="CHEBI:17544"/>
        <label>1</label>
    </ligand>
</feature>
<feature type="binding site" evidence="3">
    <location>
        <position position="146"/>
    </location>
    <ligand>
        <name>hydrogencarbonate</name>
        <dbReference type="ChEBI" id="CHEBI:17544"/>
        <label>1</label>
    </ligand>
</feature>
<feature type="binding site" evidence="3">
    <location>
        <position position="207"/>
    </location>
    <ligand>
        <name>Fe(3+)</name>
        <dbReference type="ChEBI" id="CHEBI:29034"/>
        <label>1</label>
    </ligand>
</feature>
<feature type="binding site" evidence="3">
    <location>
        <position position="268"/>
    </location>
    <ligand>
        <name>Fe(3+)</name>
        <dbReference type="ChEBI" id="CHEBI:29034"/>
        <label>1</label>
    </ligand>
</feature>
<feature type="binding site" evidence="3">
    <location>
        <position position="410"/>
    </location>
    <ligand>
        <name>Fe(3+)</name>
        <dbReference type="ChEBI" id="CHEBI:29034"/>
        <label>2</label>
    </ligand>
</feature>
<feature type="binding site" evidence="3">
    <location>
        <position position="447"/>
    </location>
    <ligand>
        <name>Fe(3+)</name>
        <dbReference type="ChEBI" id="CHEBI:29034"/>
        <label>2</label>
    </ligand>
</feature>
<feature type="binding site" evidence="3">
    <location>
        <position position="473"/>
    </location>
    <ligand>
        <name>hydrogencarbonate</name>
        <dbReference type="ChEBI" id="CHEBI:17544"/>
        <label>2</label>
    </ligand>
</feature>
<feature type="binding site" evidence="3">
    <location>
        <position position="477"/>
    </location>
    <ligand>
        <name>hydrogencarbonate</name>
        <dbReference type="ChEBI" id="CHEBI:17544"/>
        <label>2</label>
    </ligand>
</feature>
<feature type="binding site" evidence="3">
    <location>
        <position position="479"/>
    </location>
    <ligand>
        <name>hydrogencarbonate</name>
        <dbReference type="ChEBI" id="CHEBI:17544"/>
        <label>2</label>
    </ligand>
</feature>
<feature type="binding site" evidence="3">
    <location>
        <position position="480"/>
    </location>
    <ligand>
        <name>hydrogencarbonate</name>
        <dbReference type="ChEBI" id="CHEBI:17544"/>
        <label>2</label>
    </ligand>
</feature>
<feature type="binding site" evidence="3">
    <location>
        <position position="536"/>
    </location>
    <ligand>
        <name>Fe(3+)</name>
        <dbReference type="ChEBI" id="CHEBI:29034"/>
        <label>2</label>
    </ligand>
</feature>
<feature type="binding site" evidence="3">
    <location>
        <position position="604"/>
    </location>
    <ligand>
        <name>Fe(3+)</name>
        <dbReference type="ChEBI" id="CHEBI:29034"/>
        <label>2</label>
    </ligand>
</feature>
<feature type="modified residue" description="Dimethylated arginine" evidence="4">
    <location>
        <position position="42"/>
    </location>
</feature>
<feature type="modified residue" description="Phosphoserine" evidence="1">
    <location>
        <position position="388"/>
    </location>
</feature>
<feature type="modified residue" description="Phosphoserine" evidence="1">
    <location>
        <position position="685"/>
    </location>
</feature>
<feature type="glycosylation site" description="N-linked (GlcNAc...) asparagine" evidence="2">
    <location>
        <position position="512"/>
    </location>
</feature>
<feature type="disulfide bond" evidence="3">
    <location>
        <begin position="28"/>
        <end position="67"/>
    </location>
</feature>
<feature type="disulfide bond" evidence="3">
    <location>
        <begin position="38"/>
        <end position="58"/>
    </location>
</feature>
<feature type="disulfide bond" evidence="3">
    <location>
        <begin position="137"/>
        <end position="213"/>
    </location>
</feature>
<feature type="disulfide bond" evidence="3">
    <location>
        <begin position="156"/>
        <end position="350"/>
    </location>
</feature>
<feature type="disulfide bond" evidence="3">
    <location>
        <begin position="177"/>
        <end position="193"/>
    </location>
</feature>
<feature type="disulfide bond" evidence="3">
    <location>
        <begin position="180"/>
        <end position="196"/>
    </location>
</feature>
<feature type="disulfide bond" evidence="3">
    <location>
        <begin position="190"/>
        <end position="198"/>
    </location>
</feature>
<feature type="disulfide bond" evidence="3">
    <location>
        <begin position="246"/>
        <end position="260"/>
    </location>
</feature>
<feature type="disulfide bond" evidence="3">
    <location>
        <begin position="363"/>
        <end position="395"/>
    </location>
</feature>
<feature type="disulfide bond" evidence="3">
    <location>
        <begin position="373"/>
        <end position="386"/>
    </location>
</feature>
<feature type="disulfide bond" evidence="3">
    <location>
        <begin position="420"/>
        <end position="693"/>
    </location>
</feature>
<feature type="disulfide bond" evidence="3">
    <location>
        <begin position="435"/>
        <end position="656"/>
    </location>
</feature>
<feature type="disulfide bond" evidence="3">
    <location>
        <begin position="471"/>
        <end position="542"/>
    </location>
</feature>
<feature type="disulfide bond" evidence="3">
    <location>
        <begin position="495"/>
        <end position="684"/>
    </location>
</feature>
<feature type="disulfide bond" evidence="3">
    <location>
        <begin position="505"/>
        <end position="519"/>
    </location>
</feature>
<feature type="disulfide bond" evidence="3">
    <location>
        <begin position="516"/>
        <end position="525"/>
    </location>
</feature>
<feature type="disulfide bond" evidence="3">
    <location>
        <begin position="582"/>
        <end position="596"/>
    </location>
</feature>
<feature type="disulfide bond" evidence="3">
    <location>
        <begin position="634"/>
        <end position="639"/>
    </location>
</feature>
<feature type="splice variant" id="VSP_011840" description="In isoform 2." evidence="7">
    <location>
        <begin position="65"/>
        <end position="266"/>
    </location>
</feature>
<feature type="sequence conflict" description="In Ref. 1; CAA54403." evidence="8" ref="1">
    <original>A</original>
    <variation>P</variation>
    <location>
        <position position="57"/>
    </location>
</feature>
<feature type="sequence conflict" description="In Ref. 1; CAA54403." evidence="8" ref="1">
    <original>P</original>
    <variation>R</variation>
    <location>
        <position position="110"/>
    </location>
</feature>
<feature type="sequence conflict" description="In Ref. 1; CAA54403." evidence="8" ref="1">
    <original>A</original>
    <variation>R</variation>
    <location>
        <position position="318"/>
    </location>
</feature>
<feature type="sequence conflict" description="In Ref. 2; BAA07458." evidence="8" ref="2">
    <original>LLR</original>
    <variation>CYG</variation>
    <location>
        <begin position="321"/>
        <end position="323"/>
    </location>
</feature>
<feature type="sequence conflict" description="In Ref. 1; CAA54403." evidence="8" ref="1">
    <original>VPPRMDYRLYLGHSYVTAIRNQREGVCPEGS</original>
    <variation>APKDGLQAVPRPQLCHCHSKSAGSCPDA</variation>
    <location>
        <begin position="324"/>
        <end position="354"/>
    </location>
</feature>
<feature type="sequence conflict" description="In Ref. 2; BAA07458." evidence="8" ref="2">
    <original>G</original>
    <variation>A</variation>
    <location>
        <position position="353"/>
    </location>
</feature>
<feature type="sequence conflict" description="In Ref. 1; CAA54403 and 2; BAA07458." evidence="8" ref="1 2">
    <original>S</original>
    <variation>T</variation>
    <location>
        <position position="379"/>
    </location>
</feature>
<feature type="sequence conflict" description="In Ref. 1; CAA54403." evidence="8" ref="1">
    <original>S</original>
    <variation>G</variation>
    <location>
        <position position="380"/>
    </location>
</feature>
<feature type="sequence conflict" description="In Ref. 6; AAA42267." evidence="8" ref="6">
    <original>E</original>
    <variation>D</variation>
    <location>
        <position position="691"/>
    </location>
</feature>
<feature type="sequence conflict" description="In Ref. 6; AAA42267." evidence="8" ref="6">
    <original>HK</original>
    <variation>TA</variation>
    <location>
        <begin position="696"/>
        <end position="697"/>
    </location>
</feature>
<accession>P12346</accession>
<accession>Q63602</accession>
<accession>Q64628</accession>
<accession>Q64630</accession>
<accession>Q7TNX0</accession>
<organism>
    <name type="scientific">Rattus norvegicus</name>
    <name type="common">Rat</name>
    <dbReference type="NCBI Taxonomy" id="10116"/>
    <lineage>
        <taxon>Eukaryota</taxon>
        <taxon>Metazoa</taxon>
        <taxon>Chordata</taxon>
        <taxon>Craniata</taxon>
        <taxon>Vertebrata</taxon>
        <taxon>Euteleostomi</taxon>
        <taxon>Mammalia</taxon>
        <taxon>Eutheria</taxon>
        <taxon>Euarchontoglires</taxon>
        <taxon>Glires</taxon>
        <taxon>Rodentia</taxon>
        <taxon>Myomorpha</taxon>
        <taxon>Muroidea</taxon>
        <taxon>Muridae</taxon>
        <taxon>Murinae</taxon>
        <taxon>Rattus</taxon>
    </lineage>
</organism>
<comment type="function">
    <text>Transferrins are iron binding transport proteins which can bind two Fe(3+) ions in association with the binding of an anion, usually bicarbonate. It is responsible for the transport of iron from sites of absorption and heme degradation to those of storage and utilization. Serum transferrin may also have a further role in stimulating cell proliferation.</text>
</comment>
<comment type="subunit">
    <text evidence="1">Monomer. Part of a complex composed of SLC40A1/ferroportin, TF/transferrin and HEPH/hephaestin that transfers iron from cells to transferrin.</text>
</comment>
<comment type="subcellular location">
    <subcellularLocation>
        <location>Secreted</location>
    </subcellularLocation>
</comment>
<comment type="alternative products">
    <event type="alternative splicing"/>
    <isoform>
        <id>P12346-1</id>
        <name>1</name>
        <sequence type="displayed"/>
    </isoform>
    <isoform>
        <id>P12346-2</id>
        <name>2</name>
        <sequence type="described" ref="VSP_011840"/>
    </isoform>
</comment>
<comment type="tissue specificity">
    <text>Expressed by the liver and secreted in plasma.</text>
</comment>
<comment type="similarity">
    <text evidence="3">Belongs to the transferrin family.</text>
</comment>
<keyword id="KW-0025">Alternative splicing</keyword>
<keyword id="KW-0903">Direct protein sequencing</keyword>
<keyword id="KW-1015">Disulfide bond</keyword>
<keyword id="KW-0325">Glycoprotein</keyword>
<keyword id="KW-0406">Ion transport</keyword>
<keyword id="KW-0408">Iron</keyword>
<keyword id="KW-0410">Iron transport</keyword>
<keyword id="KW-0479">Metal-binding</keyword>
<keyword id="KW-0488">Methylation</keyword>
<keyword id="KW-0597">Phosphoprotein</keyword>
<keyword id="KW-1185">Reference proteome</keyword>
<keyword id="KW-0677">Repeat</keyword>
<keyword id="KW-0964">Secreted</keyword>
<keyword id="KW-0732">Signal</keyword>
<keyword id="KW-0813">Transport</keyword>
<sequence>MRFAVGALLACAALGLCLAVPDKTVKWCAVSEHENTKCISFRDHMKTVLPADGPRLACVKKTSYQDCIKAISGGEADAITLDGGWVYDAGLTPNNLKPVAAEFYGSLEHPQTHYLAVAVVKKGTDFQLNQLQGKKSCHTGLGRSAGWIIPIGLLFCNLPEPRKPLEKAVASFFSGSCVPCADPVAFPQLCQLCPGCGCSPTQPFFGYVGAFKCLRDGGGDVAFVKHTTIFEVLPQKADRDQYELLCLDNTRKPVDQYEDCYLARIPSHAVVARNGDGKEDLIWEILKVAQEHFGKGKSKDFQLFGSPLGKDLLFKDSAFGLLRVPPRMDYRLYLGHSYVTAIRNQREGVCPEGSIDSAPVKWCALSHQERAKCDEWSVSSNGQIECESAESTEDCIDKIVNGEADAMSLDGGHAYIAGQCGLVPVMAENYDISSCTNPQSDVFPKGYYAVAVVKASDSSINWNNLKGKKSCHTGVDRTAGWNIPMGLLFSRINHCKFDEFFSQGCAPGYKKNSTLCDLCIGPAKCAPNNREGYNGYTGAFQCLVEKGDVAFVKHQTVLENTNGKNTAAWAKDLKQEDFQLLCPDGTKKPVTEFATCHLAQAPNHVVVSRKEKAARVSTVLTAQKDLFWKGDKDCTGNFCLFRSSTKDLLFRDDTKCLTKLPEGTTYEEYLGAEYLQAVGNIRKCSTSRLLEACTFHKS</sequence>
<name>TRFE_RAT</name>